<sequence length="327" mass="37187">MADGELNVDSLITRLLEVRGCRPGKIVQMTEAEVRGLCIKSREIFLSQPILLELEAPLKICGDIHGQYTDLLRLFEYGGFPPEANYLFLGDYVDRGKQSLETICLLLAYKIKYPENFFLLRGNHECASINRIYGFYDECKRRFNIKLWKTFTDCFNCLPIAAIVDEKIFCCHGGLSPDLQSMEQIRRIMRPTDVPDTGLLCDLLWSDPDKDVQGWGENDRGVSFTFGADVVSKFLNRHDLDLICRAHQVVEDGYEFFAKRQLVTLFSAPNYCGEFDNAGGMMSVDETLMCSFQILKPSEKKAKYQYGGLNSGRPVTPPRTANPPKKR</sequence>
<organism>
    <name type="scientific">Rattus norvegicus</name>
    <name type="common">Rat</name>
    <dbReference type="NCBI Taxonomy" id="10116"/>
    <lineage>
        <taxon>Eukaryota</taxon>
        <taxon>Metazoa</taxon>
        <taxon>Chordata</taxon>
        <taxon>Craniata</taxon>
        <taxon>Vertebrata</taxon>
        <taxon>Euteleostomi</taxon>
        <taxon>Mammalia</taxon>
        <taxon>Eutheria</taxon>
        <taxon>Euarchontoglires</taxon>
        <taxon>Glires</taxon>
        <taxon>Rodentia</taxon>
        <taxon>Myomorpha</taxon>
        <taxon>Muroidea</taxon>
        <taxon>Muridae</taxon>
        <taxon>Murinae</taxon>
        <taxon>Rattus</taxon>
    </lineage>
</organism>
<accession>P62142</accession>
<accession>P37140</accession>
<dbReference type="EC" id="3.1.3.16" evidence="2"/>
<dbReference type="EC" id="3.1.3.53"/>
<dbReference type="EMBL" id="D90164">
    <property type="protein sequence ID" value="BAA14195.1"/>
    <property type="molecule type" value="mRNA"/>
</dbReference>
<dbReference type="EMBL" id="BC062033">
    <property type="protein sequence ID" value="AAH62033.1"/>
    <property type="molecule type" value="mRNA"/>
</dbReference>
<dbReference type="PIR" id="I76571">
    <property type="entry name" value="I76571"/>
</dbReference>
<dbReference type="RefSeq" id="NP_037197.1">
    <property type="nucleotide sequence ID" value="NM_013065.2"/>
</dbReference>
<dbReference type="RefSeq" id="XP_008762727.1">
    <property type="nucleotide sequence ID" value="XM_008764505.2"/>
</dbReference>
<dbReference type="SMR" id="P62142"/>
<dbReference type="BioGRID" id="247624">
    <property type="interactions" value="3"/>
</dbReference>
<dbReference type="FunCoup" id="P62142">
    <property type="interactions" value="3830"/>
</dbReference>
<dbReference type="IntAct" id="P62142">
    <property type="interactions" value="7"/>
</dbReference>
<dbReference type="MINT" id="P62142"/>
<dbReference type="STRING" id="10116.ENSRNOP00000006190"/>
<dbReference type="GlyGen" id="P62142">
    <property type="glycosylation" value="1 site"/>
</dbReference>
<dbReference type="iPTMnet" id="P62142"/>
<dbReference type="PhosphoSitePlus" id="P62142"/>
<dbReference type="jPOST" id="P62142"/>
<dbReference type="PaxDb" id="10116-ENSRNOP00000006190"/>
<dbReference type="Ensembl" id="ENSRNOT00000006190.5">
    <property type="protein sequence ID" value="ENSRNOP00000006190.3"/>
    <property type="gene ID" value="ENSRNOG00000004612.5"/>
</dbReference>
<dbReference type="GeneID" id="25594"/>
<dbReference type="KEGG" id="rno:25594"/>
<dbReference type="UCSC" id="RGD:3376">
    <property type="organism name" value="rat"/>
</dbReference>
<dbReference type="AGR" id="RGD:3376"/>
<dbReference type="CTD" id="5500"/>
<dbReference type="RGD" id="3376">
    <property type="gene designation" value="Ppp1cb"/>
</dbReference>
<dbReference type="eggNOG" id="KOG0374">
    <property type="taxonomic scope" value="Eukaryota"/>
</dbReference>
<dbReference type="GeneTree" id="ENSGT00940000154644"/>
<dbReference type="HOGENOM" id="CLU_004962_0_0_1"/>
<dbReference type="InParanoid" id="P62142"/>
<dbReference type="OMA" id="TVQMSEN"/>
<dbReference type="OrthoDB" id="1930084at2759"/>
<dbReference type="PhylomeDB" id="P62142"/>
<dbReference type="TreeFam" id="TF354243"/>
<dbReference type="Reactome" id="R-RNO-2565942">
    <property type="pathway name" value="Regulation of PLK1 Activity at G2/M Transition"/>
</dbReference>
<dbReference type="Reactome" id="R-RNO-5625740">
    <property type="pathway name" value="RHO GTPases activate PKNs"/>
</dbReference>
<dbReference type="Reactome" id="R-RNO-5627123">
    <property type="pathway name" value="RHO GTPases activate PAKs"/>
</dbReference>
<dbReference type="Reactome" id="R-RNO-5673000">
    <property type="pathway name" value="RAF activation"/>
</dbReference>
<dbReference type="PRO" id="PR:P62142"/>
<dbReference type="Proteomes" id="UP000002494">
    <property type="component" value="Chromosome 6"/>
</dbReference>
<dbReference type="Bgee" id="ENSRNOG00000004612">
    <property type="expression patterns" value="Expressed in quadriceps femoris and 20 other cell types or tissues"/>
</dbReference>
<dbReference type="GO" id="GO:0000781">
    <property type="term" value="C:chromosome, telomeric region"/>
    <property type="evidence" value="ECO:0000266"/>
    <property type="project" value="RGD"/>
</dbReference>
<dbReference type="GO" id="GO:0005737">
    <property type="term" value="C:cytoplasm"/>
    <property type="evidence" value="ECO:0000266"/>
    <property type="project" value="RGD"/>
</dbReference>
<dbReference type="GO" id="GO:0005829">
    <property type="term" value="C:cytosol"/>
    <property type="evidence" value="ECO:0000304"/>
    <property type="project" value="Reactome"/>
</dbReference>
<dbReference type="GO" id="GO:0042587">
    <property type="term" value="C:glycogen granule"/>
    <property type="evidence" value="ECO:0000314"/>
    <property type="project" value="RGD"/>
</dbReference>
<dbReference type="GO" id="GO:0005730">
    <property type="term" value="C:nucleolus"/>
    <property type="evidence" value="ECO:0007669"/>
    <property type="project" value="UniProtKB-SubCell"/>
</dbReference>
<dbReference type="GO" id="GO:0005654">
    <property type="term" value="C:nucleoplasm"/>
    <property type="evidence" value="ECO:0007669"/>
    <property type="project" value="UniProtKB-SubCell"/>
</dbReference>
<dbReference type="GO" id="GO:0005634">
    <property type="term" value="C:nucleus"/>
    <property type="evidence" value="ECO:0000318"/>
    <property type="project" value="GO_Central"/>
</dbReference>
<dbReference type="GO" id="GO:0000164">
    <property type="term" value="C:protein phosphatase type 1 complex"/>
    <property type="evidence" value="ECO:0000314"/>
    <property type="project" value="RGD"/>
</dbReference>
<dbReference type="GO" id="GO:0072357">
    <property type="term" value="C:PTW/PP1 phosphatase complex"/>
    <property type="evidence" value="ECO:0000250"/>
    <property type="project" value="UniProtKB"/>
</dbReference>
<dbReference type="GO" id="GO:0046872">
    <property type="term" value="F:metal ion binding"/>
    <property type="evidence" value="ECO:0007669"/>
    <property type="project" value="UniProtKB-KW"/>
</dbReference>
<dbReference type="GO" id="GO:0017018">
    <property type="term" value="F:myosin phosphatase activity"/>
    <property type="evidence" value="ECO:0000250"/>
    <property type="project" value="UniProtKB"/>
</dbReference>
<dbReference type="GO" id="GO:0050115">
    <property type="term" value="F:myosin-light-chain-phosphatase activity"/>
    <property type="evidence" value="ECO:0000250"/>
    <property type="project" value="UniProtKB"/>
</dbReference>
<dbReference type="GO" id="GO:0016791">
    <property type="term" value="F:phosphatase activity"/>
    <property type="evidence" value="ECO:0000250"/>
    <property type="project" value="UniProtKB"/>
</dbReference>
<dbReference type="GO" id="GO:0004721">
    <property type="term" value="F:phosphoprotein phosphatase activity"/>
    <property type="evidence" value="ECO:0000314"/>
    <property type="project" value="RGD"/>
</dbReference>
<dbReference type="GO" id="GO:0019901">
    <property type="term" value="F:protein kinase binding"/>
    <property type="evidence" value="ECO:0000266"/>
    <property type="project" value="RGD"/>
</dbReference>
<dbReference type="GO" id="GO:0004722">
    <property type="term" value="F:protein serine/threonine phosphatase activity"/>
    <property type="evidence" value="ECO:0000266"/>
    <property type="project" value="RGD"/>
</dbReference>
<dbReference type="GO" id="GO:0051301">
    <property type="term" value="P:cell division"/>
    <property type="evidence" value="ECO:0007669"/>
    <property type="project" value="UniProtKB-KW"/>
</dbReference>
<dbReference type="GO" id="GO:0032922">
    <property type="term" value="P:circadian regulation of gene expression"/>
    <property type="evidence" value="ECO:0000250"/>
    <property type="project" value="UniProtKB"/>
</dbReference>
<dbReference type="GO" id="GO:0043153">
    <property type="term" value="P:entrainment of circadian clock by photoperiod"/>
    <property type="evidence" value="ECO:0000250"/>
    <property type="project" value="UniProtKB"/>
</dbReference>
<dbReference type="GO" id="GO:0005977">
    <property type="term" value="P:glycogen metabolic process"/>
    <property type="evidence" value="ECO:0007669"/>
    <property type="project" value="UniProtKB-KW"/>
</dbReference>
<dbReference type="GO" id="GO:0030155">
    <property type="term" value="P:regulation of cell adhesion"/>
    <property type="evidence" value="ECO:0000250"/>
    <property type="project" value="UniProtKB"/>
</dbReference>
<dbReference type="GO" id="GO:0042752">
    <property type="term" value="P:regulation of circadian rhythm"/>
    <property type="evidence" value="ECO:0000250"/>
    <property type="project" value="UniProtKB"/>
</dbReference>
<dbReference type="GO" id="GO:0005979">
    <property type="term" value="P:regulation of glycogen biosynthetic process"/>
    <property type="evidence" value="ECO:0000314"/>
    <property type="project" value="RGD"/>
</dbReference>
<dbReference type="GO" id="GO:0005981">
    <property type="term" value="P:regulation of glycogen catabolic process"/>
    <property type="evidence" value="ECO:0000314"/>
    <property type="project" value="RGD"/>
</dbReference>
<dbReference type="CDD" id="cd07414">
    <property type="entry name" value="MPP_PP1_PPKL"/>
    <property type="match status" value="1"/>
</dbReference>
<dbReference type="FunFam" id="3.60.21.10:FF:000007">
    <property type="entry name" value="Serine/threonine-protein phosphatase"/>
    <property type="match status" value="1"/>
</dbReference>
<dbReference type="Gene3D" id="3.60.21.10">
    <property type="match status" value="1"/>
</dbReference>
<dbReference type="InterPro" id="IPR004843">
    <property type="entry name" value="Calcineurin-like_PHP_ApaH"/>
</dbReference>
<dbReference type="InterPro" id="IPR029052">
    <property type="entry name" value="Metallo-depent_PP-like"/>
</dbReference>
<dbReference type="InterPro" id="IPR050341">
    <property type="entry name" value="PP1_catalytic_subunit"/>
</dbReference>
<dbReference type="InterPro" id="IPR006186">
    <property type="entry name" value="Ser/Thr-sp_prot-phosphatase"/>
</dbReference>
<dbReference type="InterPro" id="IPR031675">
    <property type="entry name" value="STPPase_N"/>
</dbReference>
<dbReference type="PANTHER" id="PTHR11668">
    <property type="entry name" value="SERINE/THREONINE PROTEIN PHOSPHATASE"/>
    <property type="match status" value="1"/>
</dbReference>
<dbReference type="PANTHER" id="PTHR11668:SF472">
    <property type="entry name" value="SERINE_THREONINE-PROTEIN PHOSPHATASE PP1-BETA CATALYTIC SUBUNIT"/>
    <property type="match status" value="1"/>
</dbReference>
<dbReference type="Pfam" id="PF00149">
    <property type="entry name" value="Metallophos"/>
    <property type="match status" value="1"/>
</dbReference>
<dbReference type="Pfam" id="PF16891">
    <property type="entry name" value="STPPase_N"/>
    <property type="match status" value="1"/>
</dbReference>
<dbReference type="PRINTS" id="PR00114">
    <property type="entry name" value="STPHPHTASE"/>
</dbReference>
<dbReference type="SMART" id="SM00156">
    <property type="entry name" value="PP2Ac"/>
    <property type="match status" value="1"/>
</dbReference>
<dbReference type="SUPFAM" id="SSF56300">
    <property type="entry name" value="Metallo-dependent phosphatases"/>
    <property type="match status" value="1"/>
</dbReference>
<dbReference type="PROSITE" id="PS00125">
    <property type="entry name" value="SER_THR_PHOSPHATASE"/>
    <property type="match status" value="1"/>
</dbReference>
<protein>
    <recommendedName>
        <fullName>Serine/threonine-protein phosphatase PP1-beta catalytic subunit</fullName>
        <shortName>PP-1B</shortName>
        <ecNumber evidence="2">3.1.3.16</ecNumber>
        <ecNumber>3.1.3.53</ecNumber>
    </recommendedName>
</protein>
<reference key="1">
    <citation type="journal article" date="1990" name="Jpn. J. Cancer Res.">
        <title>Identification of members of the protein phosphatase 1 gene family in the rat and enhanced expression of protein phosphatase 1 alpha gene in rat hepatocellular carcinomas.</title>
        <authorList>
            <person name="Sasaki K."/>
            <person name="Shima H."/>
            <person name="Kitagawa Y."/>
            <person name="Irino S."/>
            <person name="Sugimura T."/>
            <person name="Nagao M."/>
        </authorList>
    </citation>
    <scope>NUCLEOTIDE SEQUENCE [MRNA]</scope>
</reference>
<reference key="2">
    <citation type="journal article" date="1991" name="Jpn. J. Cancer Res.">
        <authorList>
            <person name="Sasaki K."/>
            <person name="Shima H."/>
            <person name="Kitagawa Y."/>
            <person name="Irino S."/>
            <person name="Sugimura T."/>
            <person name="Nagao M."/>
        </authorList>
    </citation>
    <scope>ERRATUM OF PUBMED:2177460</scope>
</reference>
<reference key="3">
    <citation type="journal article" date="1995" name="J. Neurosci.">
        <title>Differential expression of protein phosphatase 1 isoforms in mammalian brain.</title>
        <authorList>
            <person name="da Cruz e Silva E.F."/>
            <person name="Fox C.A."/>
            <person name="Ouimet C.C."/>
            <person name="Gustafson E."/>
            <person name="Watson S.J."/>
            <person name="Greengard P."/>
        </authorList>
    </citation>
    <scope>NUCLEOTIDE SEQUENCE [MRNA]</scope>
    <source>
        <tissue>Brain</tissue>
    </source>
</reference>
<reference key="4">
    <citation type="journal article" date="2004" name="Genome Res.">
        <title>The status, quality, and expansion of the NIH full-length cDNA project: the Mammalian Gene Collection (MGC).</title>
        <authorList>
            <consortium name="The MGC Project Team"/>
        </authorList>
    </citation>
    <scope>NUCLEOTIDE SEQUENCE [LARGE SCALE MRNA]</scope>
    <source>
        <tissue>Prostate</tissue>
    </source>
</reference>
<reference key="5">
    <citation type="journal article" date="1995" name="FEBS Lett.">
        <title>Purification of the hepatic glycogen-associated form of protein phosphatase-1 by microcystin-Sepharose affinity chromatography.</title>
        <authorList>
            <person name="Moorhead G."/>
            <person name="MacKintosh C."/>
            <person name="Morrice N."/>
            <person name="Cohen P."/>
        </authorList>
    </citation>
    <scope>PROTEIN SEQUENCE OF 26-35</scope>
</reference>
<comment type="function">
    <text evidence="1 2">Protein phosphatase that associates with over 200 regulatory proteins to form highly specific holoenzymes which dephosphorylate hundreds of biological targets. Protein phosphatase (PP1) is essential for cell division, it participates in the regulation of glycogen metabolism, muscle contractility and protein synthesis. Involved in regulation of ionic conductances and long-term synaptic plasticity. Component of the PTW/PP1 phosphatase complex, which plays a role in the control of chromatin structure and cell cycle progression during the transition from mitosis into interphase. In balance with CSNK1D and CSNK1E, determines the circadian period length, through the regulation of the speed and rhythmicity of PER1 and PER2 phosphorylation. May dephosphorylate CSNK1D and CSNK1E (By similarity). Core component of the SHOC2-MRAS-PP1c (SMP) holophosphatase complex that regulates the MAPK pathway activation (By similarity). The SMP complex specifically dephosphorylates the inhibitory phosphorylation at 'Ser-259' of RAF1 kinase, 'Ser-365' of BRAF kinase and 'Ser-214' of ARAF kinase, stimulating their kinase activities (By similarity). The SMP complex enhances the dephosphorylation activity and substrate specificity of PP1c (By similarity).</text>
</comment>
<comment type="catalytic activity">
    <reaction evidence="2">
        <text>O-phospho-L-seryl-[protein] + H2O = L-seryl-[protein] + phosphate</text>
        <dbReference type="Rhea" id="RHEA:20629"/>
        <dbReference type="Rhea" id="RHEA-COMP:9863"/>
        <dbReference type="Rhea" id="RHEA-COMP:11604"/>
        <dbReference type="ChEBI" id="CHEBI:15377"/>
        <dbReference type="ChEBI" id="CHEBI:29999"/>
        <dbReference type="ChEBI" id="CHEBI:43474"/>
        <dbReference type="ChEBI" id="CHEBI:83421"/>
        <dbReference type="EC" id="3.1.3.16"/>
    </reaction>
</comment>
<comment type="catalytic activity">
    <reaction>
        <text>O-phospho-L-threonyl-[protein] + H2O = L-threonyl-[protein] + phosphate</text>
        <dbReference type="Rhea" id="RHEA:47004"/>
        <dbReference type="Rhea" id="RHEA-COMP:11060"/>
        <dbReference type="Rhea" id="RHEA-COMP:11605"/>
        <dbReference type="ChEBI" id="CHEBI:15377"/>
        <dbReference type="ChEBI" id="CHEBI:30013"/>
        <dbReference type="ChEBI" id="CHEBI:43474"/>
        <dbReference type="ChEBI" id="CHEBI:61977"/>
        <dbReference type="EC" id="3.1.3.16"/>
    </reaction>
</comment>
<comment type="catalytic activity">
    <reaction>
        <text>O-phospho-L-seryl-[myosin light chain] + H2O = L-seryl-[myosin light chain] + phosphate</text>
        <dbReference type="Rhea" id="RHEA:12849"/>
        <dbReference type="Rhea" id="RHEA-COMP:13684"/>
        <dbReference type="Rhea" id="RHEA-COMP:13685"/>
        <dbReference type="ChEBI" id="CHEBI:15377"/>
        <dbReference type="ChEBI" id="CHEBI:29999"/>
        <dbReference type="ChEBI" id="CHEBI:43474"/>
        <dbReference type="ChEBI" id="CHEBI:83421"/>
        <dbReference type="EC" id="3.1.3.53"/>
    </reaction>
</comment>
<comment type="catalytic activity">
    <reaction>
        <text>O-phospho-L-threonyl-[myosin light chain] + H2O = L-threonyl-[myosin light chain] + phosphate</text>
        <dbReference type="Rhea" id="RHEA:53988"/>
        <dbReference type="Rhea" id="RHEA-COMP:13686"/>
        <dbReference type="Rhea" id="RHEA-COMP:13687"/>
        <dbReference type="ChEBI" id="CHEBI:15377"/>
        <dbReference type="ChEBI" id="CHEBI:30013"/>
        <dbReference type="ChEBI" id="CHEBI:43474"/>
        <dbReference type="ChEBI" id="CHEBI:61977"/>
        <dbReference type="EC" id="3.1.3.53"/>
    </reaction>
</comment>
<comment type="cofactor">
    <cofactor evidence="1">
        <name>Mn(2+)</name>
        <dbReference type="ChEBI" id="CHEBI:29035"/>
    </cofactor>
    <text evidence="1">Binds 2 manganese ions per subunit.</text>
</comment>
<comment type="activity regulation">
    <text evidence="1">Inhibited by the toxins okadaic acid, tautomycin and microcystin Leu-Arg. The phosphatase activity of the PPP1R15A-PP1 complex toward EIF2S1 is specifically inhibited by Salubrinal, a drug that protects cells from endoplasmic reticulum stress (By similarity).</text>
</comment>
<comment type="subunit">
    <text evidence="2 3">PP1 comprises a catalytic subunit, PPP1CA, PPP1CB or PPP1CC, which is folded into its native form by inhibitor 2 and glycogen synthetase kinase 3, and then complexed to one or several targeting or regulatory subunits. The targeting or regulatory subunits determine the substrate specificity of PP1. PPP1R12A, PPP1R12B and PPP1R12C mediate binding to myosin. PPP1R3A (in skeletal muscle), PPP1R3B (in liver), PPP1R3C, PPP1R3D and PPP1R3F (in brain) mediate binding to glycogen. PPP1R15A and PPP1R15B mediate binding to EIF2S1. Part of a complex containing PPP1R15B, PP1 and NCK1/2. Interacts with PPP1R7 and PPP1R12C. Interacts with PPP1R16B. Component of the PTW/PP1 phosphatase complex, composed of PPP1R10/PNUTS, TOX4, WDR82, and PPP1CA or PPP1CB or PPP1CC. Interacts with PPP1R8. Interacts with PPP1R12A and NUAK1; the interaction is direct. Interacts with TRIM28; the interaction is weak. Interacts with FOXP3. Interacts with RRP1B. Interacts with SERPINE1. Interacts with LZTR1 (By similarity). Component of the SHOC2-MRAS-PP1c (SMP) complex consisting of SHOC2, GTP-bound M-Ras/MRAS and the catalytic subunit of protein phosphatase 1 (either PPP1CA, PPP1CB or PPP1CC) (By similarity). SHOC2 and PP1c preferably bind M-Ras/MRAS, but they also bind K-Ras/KRAS, N-Ras/NRAS and H-Ras/HRAS; these interactions are GTP-dependent and both SHOC2 and PP1c are required to form a stable complex (By similarity). Interacts with SHOC2 in the absence of Ras GTPases (By similarity).</text>
</comment>
<comment type="interaction">
    <interactant intactId="EBI-352326">
        <id>P62142</id>
    </interactant>
    <interactant intactId="EBI-7092421">
        <id>O35867</id>
        <label>Ppp1r9a</label>
    </interactant>
    <organismsDiffer>false</organismsDiffer>
    <experiments>2</experiments>
</comment>
<comment type="interaction">
    <interactant intactId="EBI-352326">
        <id>P62142</id>
    </interactant>
    <interactant intactId="EBI-916235">
        <id>P09895</id>
        <label>Rpl5</label>
    </interactant>
    <organismsDiffer>false</organismsDiffer>
    <experiments>2</experiments>
</comment>
<comment type="subcellular location">
    <subcellularLocation>
        <location evidence="2">Cytoplasm</location>
    </subcellularLocation>
    <subcellularLocation>
        <location evidence="2">Nucleus</location>
    </subcellularLocation>
    <subcellularLocation>
        <location evidence="2">Nucleus</location>
        <location evidence="2">Nucleoplasm</location>
    </subcellularLocation>
    <subcellularLocation>
        <location evidence="2">Nucleus</location>
        <location evidence="2">Nucleolus</location>
    </subcellularLocation>
    <text evidence="2">Highly mobile in cells and can be relocalized through interaction with targeting subunits. In the presence of PPP1R8 relocalizes from the nucleus to nuclear speckles.</text>
</comment>
<comment type="similarity">
    <text evidence="5">Belongs to the PPP phosphatase family. PP-1 subfamily.</text>
</comment>
<comment type="online information" name="Protein Spotlight">
    <link uri="https://www.proteinspotlight.org/back_issues/032"/>
    <text>The things we forget - Issue 32 of March 2003</text>
</comment>
<gene>
    <name type="primary">Ppp1cb</name>
</gene>
<keyword id="KW-0007">Acetylation</keyword>
<keyword id="KW-0090">Biological rhythms</keyword>
<keyword id="KW-0119">Carbohydrate metabolism</keyword>
<keyword id="KW-0131">Cell cycle</keyword>
<keyword id="KW-0132">Cell division</keyword>
<keyword id="KW-0963">Cytoplasm</keyword>
<keyword id="KW-0903">Direct protein sequencing</keyword>
<keyword id="KW-0321">Glycogen metabolism</keyword>
<keyword id="KW-0378">Hydrolase</keyword>
<keyword id="KW-0464">Manganese</keyword>
<keyword id="KW-0479">Metal-binding</keyword>
<keyword id="KW-0539">Nucleus</keyword>
<keyword id="KW-0597">Phosphoprotein</keyword>
<keyword id="KW-0904">Protein phosphatase</keyword>
<keyword id="KW-1185">Reference proteome</keyword>
<name>PP1B_RAT</name>
<feature type="initiator methionine" description="Removed" evidence="2">
    <location>
        <position position="1"/>
    </location>
</feature>
<feature type="chain" id="PRO_0000058783" description="Serine/threonine-protein phosphatase PP1-beta catalytic subunit">
    <location>
        <begin position="2"/>
        <end position="327"/>
    </location>
</feature>
<feature type="region of interest" description="Disordered" evidence="4">
    <location>
        <begin position="305"/>
        <end position="327"/>
    </location>
</feature>
<feature type="active site" description="Proton donor" evidence="1">
    <location>
        <position position="124"/>
    </location>
</feature>
<feature type="binding site" evidence="1">
    <location>
        <position position="63"/>
    </location>
    <ligand>
        <name>Mn(2+)</name>
        <dbReference type="ChEBI" id="CHEBI:29035"/>
        <label>1</label>
    </ligand>
</feature>
<feature type="binding site" evidence="1">
    <location>
        <position position="65"/>
    </location>
    <ligand>
        <name>Mn(2+)</name>
        <dbReference type="ChEBI" id="CHEBI:29035"/>
        <label>1</label>
    </ligand>
</feature>
<feature type="binding site" evidence="1">
    <location>
        <position position="91"/>
    </location>
    <ligand>
        <name>Mn(2+)</name>
        <dbReference type="ChEBI" id="CHEBI:29035"/>
        <label>1</label>
    </ligand>
</feature>
<feature type="binding site" evidence="1">
    <location>
        <position position="91"/>
    </location>
    <ligand>
        <name>Mn(2+)</name>
        <dbReference type="ChEBI" id="CHEBI:29035"/>
        <label>2</label>
    </ligand>
</feature>
<feature type="binding site" evidence="1">
    <location>
        <position position="123"/>
    </location>
    <ligand>
        <name>Mn(2+)</name>
        <dbReference type="ChEBI" id="CHEBI:29035"/>
        <label>2</label>
    </ligand>
</feature>
<feature type="binding site" evidence="1">
    <location>
        <position position="172"/>
    </location>
    <ligand>
        <name>Mn(2+)</name>
        <dbReference type="ChEBI" id="CHEBI:29035"/>
        <label>2</label>
    </ligand>
</feature>
<feature type="binding site" evidence="1">
    <location>
        <position position="247"/>
    </location>
    <ligand>
        <name>Mn(2+)</name>
        <dbReference type="ChEBI" id="CHEBI:29035"/>
        <label>2</label>
    </ligand>
</feature>
<feature type="modified residue" description="N-acetylalanine" evidence="2">
    <location>
        <position position="2"/>
    </location>
</feature>
<feature type="modified residue" description="Phosphothreonine" evidence="2">
    <location>
        <position position="316"/>
    </location>
</feature>
<evidence type="ECO:0000250" key="1"/>
<evidence type="ECO:0000250" key="2">
    <source>
        <dbReference type="UniProtKB" id="P62140"/>
    </source>
</evidence>
<evidence type="ECO:0000250" key="3">
    <source>
        <dbReference type="UniProtKB" id="P62141"/>
    </source>
</evidence>
<evidence type="ECO:0000256" key="4">
    <source>
        <dbReference type="SAM" id="MobiDB-lite"/>
    </source>
</evidence>
<evidence type="ECO:0000305" key="5"/>
<proteinExistence type="evidence at protein level"/>